<proteinExistence type="inferred from homology"/>
<dbReference type="EC" id="2.7.11.5" evidence="1"/>
<dbReference type="EC" id="3.1.3.-" evidence="1"/>
<dbReference type="EMBL" id="CR555306">
    <property type="protein sequence ID" value="CAI06560.1"/>
    <property type="molecule type" value="Genomic_DNA"/>
</dbReference>
<dbReference type="RefSeq" id="WP_011236293.1">
    <property type="nucleotide sequence ID" value="NC_006513.1"/>
</dbReference>
<dbReference type="SMR" id="Q5P801"/>
<dbReference type="STRING" id="76114.ebA835"/>
<dbReference type="KEGG" id="eba:ebA835"/>
<dbReference type="eggNOG" id="COG4579">
    <property type="taxonomic scope" value="Bacteria"/>
</dbReference>
<dbReference type="HOGENOM" id="CLU_033804_1_1_4"/>
<dbReference type="OrthoDB" id="5287793at2"/>
<dbReference type="Proteomes" id="UP000006552">
    <property type="component" value="Chromosome"/>
</dbReference>
<dbReference type="GO" id="GO:0005737">
    <property type="term" value="C:cytoplasm"/>
    <property type="evidence" value="ECO:0007669"/>
    <property type="project" value="UniProtKB-SubCell"/>
</dbReference>
<dbReference type="GO" id="GO:0008772">
    <property type="term" value="F:[isocitrate dehydrogenase (NADP+)] kinase activity"/>
    <property type="evidence" value="ECO:0007669"/>
    <property type="project" value="UniProtKB-UniRule"/>
</dbReference>
<dbReference type="GO" id="GO:0016208">
    <property type="term" value="F:AMP binding"/>
    <property type="evidence" value="ECO:0007669"/>
    <property type="project" value="TreeGrafter"/>
</dbReference>
<dbReference type="GO" id="GO:0005524">
    <property type="term" value="F:ATP binding"/>
    <property type="evidence" value="ECO:0007669"/>
    <property type="project" value="UniProtKB-UniRule"/>
</dbReference>
<dbReference type="GO" id="GO:0004721">
    <property type="term" value="F:phosphoprotein phosphatase activity"/>
    <property type="evidence" value="ECO:0007669"/>
    <property type="project" value="UniProtKB-KW"/>
</dbReference>
<dbReference type="GO" id="GO:0004674">
    <property type="term" value="F:protein serine/threonine kinase activity"/>
    <property type="evidence" value="ECO:0007669"/>
    <property type="project" value="UniProtKB-KW"/>
</dbReference>
<dbReference type="GO" id="GO:0006006">
    <property type="term" value="P:glucose metabolic process"/>
    <property type="evidence" value="ECO:0007669"/>
    <property type="project" value="InterPro"/>
</dbReference>
<dbReference type="GO" id="GO:0006097">
    <property type="term" value="P:glyoxylate cycle"/>
    <property type="evidence" value="ECO:0007669"/>
    <property type="project" value="UniProtKB-UniRule"/>
</dbReference>
<dbReference type="GO" id="GO:0006099">
    <property type="term" value="P:tricarboxylic acid cycle"/>
    <property type="evidence" value="ECO:0007669"/>
    <property type="project" value="UniProtKB-UniRule"/>
</dbReference>
<dbReference type="HAMAP" id="MF_00747">
    <property type="entry name" value="AceK"/>
    <property type="match status" value="1"/>
</dbReference>
<dbReference type="InterPro" id="IPR046855">
    <property type="entry name" value="AceK_kinase"/>
</dbReference>
<dbReference type="InterPro" id="IPR046854">
    <property type="entry name" value="AceK_regulatory"/>
</dbReference>
<dbReference type="InterPro" id="IPR010452">
    <property type="entry name" value="Isocitrate_DH_AceK"/>
</dbReference>
<dbReference type="NCBIfam" id="NF002804">
    <property type="entry name" value="PRK02946.1"/>
    <property type="match status" value="1"/>
</dbReference>
<dbReference type="PANTHER" id="PTHR39559">
    <property type="match status" value="1"/>
</dbReference>
<dbReference type="PANTHER" id="PTHR39559:SF1">
    <property type="entry name" value="ISOCITRATE DEHYDROGENASE KINASE_PHOSPHATASE"/>
    <property type="match status" value="1"/>
</dbReference>
<dbReference type="Pfam" id="PF06315">
    <property type="entry name" value="AceK_kinase"/>
    <property type="match status" value="1"/>
</dbReference>
<dbReference type="Pfam" id="PF20423">
    <property type="entry name" value="AceK_regulatory"/>
    <property type="match status" value="1"/>
</dbReference>
<dbReference type="PIRSF" id="PIRSF000719">
    <property type="entry name" value="AceK"/>
    <property type="match status" value="1"/>
</dbReference>
<sequence length="591" mass="69162">MDASVGENPVAQSIAQAMIEGFNKHYRIFRETSRRAKESFEAAEWQAQIDAVRERVQFYDERVDEAVRRLHEEFDADSLDDSTWQQLKLQYIGILMRHKQPELAETFFNSVCCKILHRTYFNNDYLFARPAVSTEYIESYPPVYSSYYPQDEGLRTTVRRIIEDFDWQRPFANLDRDIDNILRAVHEHIGAWPDMEVNCQIQVLYSAFYRNKTAYIIGKAINGYQEYPFALAVRHNPAGRLEADTILLDPWRISVLFSLSRAYFLVDMEVPSGYVHFLRSIMPNKHRSELYTMLGLGKQGKTMFFRDLIAHLRHSNDQFIIAPGIRGLVMLVFTLPSYPYVFKIIKDVFGASKNMDRATVKRKYLMVKQVDRVGRLADTLEFSYAALPLSRFHPELLDELRALAPSSFEIEGDSVIIKHLYIERRMTPLNIYLEHADDDQVEYAVREYGNAIRELATANIFPGDMLWKNFGVTRYGRVVFYDYDEIEFMTAMNFRRIPPAPYPEMEMAAEPWYSAGPMDVFPEEFATFLLGAPRVRKAFLKHHRDLLDAKFWQDVQASIRKGYLEDFFPYPTELRFCNMWSNERGRAHQAA</sequence>
<gene>
    <name evidence="1" type="primary">aceK</name>
    <name type="ordered locus">AZOSEA04380</name>
    <name type="ORF">ebA835</name>
</gene>
<organism>
    <name type="scientific">Aromatoleum aromaticum (strain DSM 19018 / LMG 30748 / EbN1)</name>
    <name type="common">Azoarcus sp. (strain EbN1)</name>
    <dbReference type="NCBI Taxonomy" id="76114"/>
    <lineage>
        <taxon>Bacteria</taxon>
        <taxon>Pseudomonadati</taxon>
        <taxon>Pseudomonadota</taxon>
        <taxon>Betaproteobacteria</taxon>
        <taxon>Rhodocyclales</taxon>
        <taxon>Rhodocyclaceae</taxon>
        <taxon>Aromatoleum</taxon>
    </lineage>
</organism>
<evidence type="ECO:0000255" key="1">
    <source>
        <dbReference type="HAMAP-Rule" id="MF_00747"/>
    </source>
</evidence>
<reference key="1">
    <citation type="journal article" date="2005" name="Arch. Microbiol.">
        <title>The genome sequence of an anaerobic aromatic-degrading denitrifying bacterium, strain EbN1.</title>
        <authorList>
            <person name="Rabus R."/>
            <person name="Kube M."/>
            <person name="Heider J."/>
            <person name="Beck A."/>
            <person name="Heitmann K."/>
            <person name="Widdel F."/>
            <person name="Reinhardt R."/>
        </authorList>
    </citation>
    <scope>NUCLEOTIDE SEQUENCE [LARGE SCALE GENOMIC DNA]</scope>
    <source>
        <strain>DSM 19018 / LMG 30748 / EbN1</strain>
    </source>
</reference>
<feature type="chain" id="PRO_0000288282" description="Isocitrate dehydrogenase kinase/phosphatase">
    <location>
        <begin position="1"/>
        <end position="591"/>
    </location>
</feature>
<feature type="active site" evidence="1">
    <location>
        <position position="378"/>
    </location>
</feature>
<feature type="binding site" evidence="1">
    <location>
        <begin position="322"/>
        <end position="328"/>
    </location>
    <ligand>
        <name>ATP</name>
        <dbReference type="ChEBI" id="CHEBI:30616"/>
    </ligand>
</feature>
<feature type="binding site" evidence="1">
    <location>
        <position position="343"/>
    </location>
    <ligand>
        <name>ATP</name>
        <dbReference type="ChEBI" id="CHEBI:30616"/>
    </ligand>
</feature>
<accession>Q5P801</accession>
<comment type="function">
    <text evidence="1">Bifunctional enzyme which can phosphorylate or dephosphorylate isocitrate dehydrogenase (IDH) on a specific serine residue. This is a regulatory mechanism which enables bacteria to bypass the Krebs cycle via the glyoxylate shunt in response to the source of carbon. When bacteria are grown on glucose, IDH is fully active and unphosphorylated, but when grown on acetate or ethanol, the activity of IDH declines drastically concomitant with its phosphorylation.</text>
</comment>
<comment type="catalytic activity">
    <reaction evidence="1">
        <text>L-seryl-[isocitrate dehydrogenase] + ATP = O-phospho-L-seryl-[isocitrate dehydrogenase] + ADP + H(+)</text>
        <dbReference type="Rhea" id="RHEA:43540"/>
        <dbReference type="Rhea" id="RHEA-COMP:10605"/>
        <dbReference type="Rhea" id="RHEA-COMP:10606"/>
        <dbReference type="ChEBI" id="CHEBI:15378"/>
        <dbReference type="ChEBI" id="CHEBI:29999"/>
        <dbReference type="ChEBI" id="CHEBI:30616"/>
        <dbReference type="ChEBI" id="CHEBI:83421"/>
        <dbReference type="ChEBI" id="CHEBI:456216"/>
        <dbReference type="EC" id="2.7.11.5"/>
    </reaction>
</comment>
<comment type="subcellular location">
    <subcellularLocation>
        <location evidence="1">Cytoplasm</location>
    </subcellularLocation>
</comment>
<comment type="similarity">
    <text evidence="1">Belongs to the AceK family.</text>
</comment>
<name>ACEK_AROAE</name>
<keyword id="KW-0067">ATP-binding</keyword>
<keyword id="KW-0963">Cytoplasm</keyword>
<keyword id="KW-0329">Glyoxylate bypass</keyword>
<keyword id="KW-0378">Hydrolase</keyword>
<keyword id="KW-0418">Kinase</keyword>
<keyword id="KW-0547">Nucleotide-binding</keyword>
<keyword id="KW-0904">Protein phosphatase</keyword>
<keyword id="KW-1185">Reference proteome</keyword>
<keyword id="KW-0723">Serine/threonine-protein kinase</keyword>
<keyword id="KW-0808">Transferase</keyword>
<keyword id="KW-0816">Tricarboxylic acid cycle</keyword>
<protein>
    <recommendedName>
        <fullName evidence="1">Isocitrate dehydrogenase kinase/phosphatase</fullName>
        <shortName evidence="1">IDH kinase/phosphatase</shortName>
        <shortName evidence="1">IDHK/P</shortName>
        <ecNumber evidence="1">2.7.11.5</ecNumber>
        <ecNumber evidence="1">3.1.3.-</ecNumber>
    </recommendedName>
</protein>